<name>HUTU_TRIRP</name>
<dbReference type="EC" id="4.2.1.49"/>
<dbReference type="EMBL" id="X68950">
    <property type="protein sequence ID" value="CAA48765.1"/>
    <property type="molecule type" value="Genomic_DNA"/>
</dbReference>
<dbReference type="PIR" id="S29246">
    <property type="entry name" value="S29246"/>
</dbReference>
<dbReference type="SMR" id="P53385"/>
<dbReference type="UniPathway" id="UPA00379">
    <property type="reaction ID" value="UER00550"/>
</dbReference>
<dbReference type="GO" id="GO:0016153">
    <property type="term" value="F:urocanate hydratase activity"/>
    <property type="evidence" value="ECO:0007669"/>
    <property type="project" value="UniProtKB-EC"/>
</dbReference>
<dbReference type="GO" id="GO:0019556">
    <property type="term" value="P:L-histidine catabolic process to glutamate and formamide"/>
    <property type="evidence" value="ECO:0007669"/>
    <property type="project" value="UniProtKB-UniPathway"/>
</dbReference>
<dbReference type="GO" id="GO:0019557">
    <property type="term" value="P:L-histidine catabolic process to glutamate and formate"/>
    <property type="evidence" value="ECO:0007669"/>
    <property type="project" value="UniProtKB-UniPathway"/>
</dbReference>
<dbReference type="FunFam" id="3.40.50.10730:FF:000001">
    <property type="entry name" value="Urocanate hydratase"/>
    <property type="match status" value="1"/>
</dbReference>
<dbReference type="Gene3D" id="3.40.50.10730">
    <property type="entry name" value="Urocanase like domains"/>
    <property type="match status" value="1"/>
</dbReference>
<dbReference type="Gene3D" id="3.40.1770.10">
    <property type="entry name" value="Urocanase superfamily"/>
    <property type="match status" value="1"/>
</dbReference>
<dbReference type="HAMAP" id="MF_00577">
    <property type="entry name" value="HutU"/>
    <property type="match status" value="1"/>
</dbReference>
<dbReference type="InterPro" id="IPR055351">
    <property type="entry name" value="Urocanase"/>
</dbReference>
<dbReference type="InterPro" id="IPR023637">
    <property type="entry name" value="Urocanase-like"/>
</dbReference>
<dbReference type="InterPro" id="IPR035401">
    <property type="entry name" value="Urocanase_C"/>
</dbReference>
<dbReference type="InterPro" id="IPR038364">
    <property type="entry name" value="Urocanase_central_sf"/>
</dbReference>
<dbReference type="InterPro" id="IPR023636">
    <property type="entry name" value="Urocanase_CS"/>
</dbReference>
<dbReference type="InterPro" id="IPR035400">
    <property type="entry name" value="Urocanase_N"/>
</dbReference>
<dbReference type="InterPro" id="IPR035085">
    <property type="entry name" value="Urocanase_Rossmann-like"/>
</dbReference>
<dbReference type="InterPro" id="IPR036190">
    <property type="entry name" value="Urocanase_sf"/>
</dbReference>
<dbReference type="NCBIfam" id="TIGR01228">
    <property type="entry name" value="hutU"/>
    <property type="match status" value="1"/>
</dbReference>
<dbReference type="NCBIfam" id="NF003820">
    <property type="entry name" value="PRK05414.1"/>
    <property type="match status" value="1"/>
</dbReference>
<dbReference type="PANTHER" id="PTHR12216">
    <property type="entry name" value="UROCANATE HYDRATASE"/>
    <property type="match status" value="1"/>
</dbReference>
<dbReference type="PANTHER" id="PTHR12216:SF4">
    <property type="entry name" value="UROCANATE HYDRATASE"/>
    <property type="match status" value="1"/>
</dbReference>
<dbReference type="Pfam" id="PF01175">
    <property type="entry name" value="Urocanase"/>
    <property type="match status" value="1"/>
</dbReference>
<dbReference type="Pfam" id="PF17392">
    <property type="entry name" value="Urocanase_C"/>
    <property type="match status" value="1"/>
</dbReference>
<dbReference type="Pfam" id="PF17391">
    <property type="entry name" value="Urocanase_N"/>
    <property type="match status" value="1"/>
</dbReference>
<dbReference type="PIRSF" id="PIRSF001423">
    <property type="entry name" value="Urocanate_hydrat"/>
    <property type="match status" value="1"/>
</dbReference>
<dbReference type="SUPFAM" id="SSF111326">
    <property type="entry name" value="Urocanase"/>
    <property type="match status" value="1"/>
</dbReference>
<dbReference type="PROSITE" id="PS01233">
    <property type="entry name" value="UROCANASE"/>
    <property type="match status" value="1"/>
</dbReference>
<organism>
    <name type="scientific">Trifolium repens</name>
    <name type="common">Creeping white clover</name>
    <dbReference type="NCBI Taxonomy" id="3899"/>
    <lineage>
        <taxon>Eukaryota</taxon>
        <taxon>Viridiplantae</taxon>
        <taxon>Streptophyta</taxon>
        <taxon>Embryophyta</taxon>
        <taxon>Tracheophyta</taxon>
        <taxon>Spermatophyta</taxon>
        <taxon>Magnoliopsida</taxon>
        <taxon>eudicotyledons</taxon>
        <taxon>Gunneridae</taxon>
        <taxon>Pentapetalae</taxon>
        <taxon>rosids</taxon>
        <taxon>fabids</taxon>
        <taxon>Fabales</taxon>
        <taxon>Fabaceae</taxon>
        <taxon>Papilionoideae</taxon>
        <taxon>50 kb inversion clade</taxon>
        <taxon>NPAAA clade</taxon>
        <taxon>Hologalegina</taxon>
        <taxon>IRL clade</taxon>
        <taxon>Trifolieae</taxon>
        <taxon>Trifolium</taxon>
    </lineage>
</organism>
<evidence type="ECO:0000250" key="1"/>
<evidence type="ECO:0000250" key="2">
    <source>
        <dbReference type="UniProtKB" id="P25503"/>
    </source>
</evidence>
<evidence type="ECO:0000305" key="3"/>
<keyword id="KW-0369">Histidine metabolism</keyword>
<keyword id="KW-0456">Lyase</keyword>
<keyword id="KW-0520">NAD</keyword>
<accession>P53385</accession>
<accession>P81170</accession>
<reference key="1">
    <citation type="journal article" date="1992" name="FEBS Lett.">
        <title>Isolation, sequencing and expression in E. coli of the urocanase gene from white clover (Trifolium repens).</title>
        <authorList>
            <person name="Koberstaedt A."/>
            <person name="Lenz M."/>
            <person name="Retey J."/>
        </authorList>
    </citation>
    <scope>NUCLEOTIDE SEQUENCE [GENOMIC DNA]</scope>
    <source>
        <strain>cv. Huia</strain>
    </source>
</reference>
<protein>
    <recommendedName>
        <fullName>Urocanate hydratase</fullName>
        <shortName>Urocanase</shortName>
        <ecNumber>4.2.1.49</ecNumber>
    </recommendedName>
    <alternativeName>
        <fullName>Imidazolonepropionate hydrolase</fullName>
    </alternativeName>
</protein>
<feature type="chain" id="PRO_0000207373" description="Urocanate hydratase">
    <location>
        <begin position="1"/>
        <end position="564"/>
    </location>
</feature>
<feature type="active site" evidence="1">
    <location>
        <position position="416"/>
    </location>
</feature>
<feature type="binding site" evidence="2">
    <location>
        <begin position="54"/>
        <end position="55"/>
    </location>
    <ligand>
        <name>NAD(+)</name>
        <dbReference type="ChEBI" id="CHEBI:57540"/>
    </ligand>
</feature>
<feature type="binding site" evidence="2">
    <location>
        <position position="132"/>
    </location>
    <ligand>
        <name>NAD(+)</name>
        <dbReference type="ChEBI" id="CHEBI:57540"/>
    </ligand>
</feature>
<feature type="binding site" evidence="2">
    <location>
        <begin position="178"/>
        <end position="180"/>
    </location>
    <ligand>
        <name>NAD(+)</name>
        <dbReference type="ChEBI" id="CHEBI:57540"/>
    </ligand>
</feature>
<feature type="binding site" evidence="2">
    <location>
        <position position="198"/>
    </location>
    <ligand>
        <name>NAD(+)</name>
        <dbReference type="ChEBI" id="CHEBI:57540"/>
    </ligand>
</feature>
<feature type="binding site" evidence="2">
    <location>
        <position position="203"/>
    </location>
    <ligand>
        <name>NAD(+)</name>
        <dbReference type="ChEBI" id="CHEBI:57540"/>
    </ligand>
</feature>
<feature type="binding site" evidence="2">
    <location>
        <begin position="244"/>
        <end position="245"/>
    </location>
    <ligand>
        <name>NAD(+)</name>
        <dbReference type="ChEBI" id="CHEBI:57540"/>
    </ligand>
</feature>
<feature type="binding site" evidence="2">
    <location>
        <begin position="269"/>
        <end position="273"/>
    </location>
    <ligand>
        <name>NAD(+)</name>
        <dbReference type="ChEBI" id="CHEBI:57540"/>
    </ligand>
</feature>
<feature type="binding site" evidence="2">
    <location>
        <begin position="279"/>
        <end position="280"/>
    </location>
    <ligand>
        <name>NAD(+)</name>
        <dbReference type="ChEBI" id="CHEBI:57540"/>
    </ligand>
</feature>
<feature type="binding site" evidence="2">
    <location>
        <position position="328"/>
    </location>
    <ligand>
        <name>NAD(+)</name>
        <dbReference type="ChEBI" id="CHEBI:57540"/>
    </ligand>
</feature>
<feature type="binding site" evidence="2">
    <location>
        <position position="498"/>
    </location>
    <ligand>
        <name>NAD(+)</name>
        <dbReference type="ChEBI" id="CHEBI:57540"/>
    </ligand>
</feature>
<comment type="catalytic activity">
    <reaction>
        <text>4-imidazolone-5-propanoate = trans-urocanate + H2O</text>
        <dbReference type="Rhea" id="RHEA:13101"/>
        <dbReference type="ChEBI" id="CHEBI:15377"/>
        <dbReference type="ChEBI" id="CHEBI:17771"/>
        <dbReference type="ChEBI" id="CHEBI:77893"/>
        <dbReference type="EC" id="4.2.1.49"/>
    </reaction>
</comment>
<comment type="cofactor">
    <cofactor>
        <name>NAD(+)</name>
        <dbReference type="ChEBI" id="CHEBI:57540"/>
    </cofactor>
    <text>Binds 1 NAD(+) per subunit.</text>
</comment>
<comment type="pathway">
    <text>Amino-acid degradation; L-histidine degradation into L-glutamate; N-formimidoyl-L-glutamate from L-histidine: step 2/3.</text>
</comment>
<comment type="subunit">
    <text>Homodimer.</text>
</comment>
<comment type="similarity">
    <text evidence="3">Belongs to the urocanase family.</text>
</comment>
<proteinExistence type="inferred from homology"/>
<sequence>MTDSVSKAVARTIRAPHGSELHCANWLIEAAYRMIQNNLDPDVAERPEDLVVYGGIGKAARNWACFEQILRSLQALQPEETLLVQSGKPVGVFRTHADAPRVLIANSNLVPHWATWDHFHELDKAGLMMYGQMTAGSWIYIGAQGIVQGTFETFVEAGRKHYNGDLTGKWILTAGLGGMGGAQPLAGVLAGACVLAVECQESRIDFRLRTRYLDHKAFSVDEALAIIDKACKEKRAISVGLLGNAAEILPELVQRAKAGGMKPDIVTDQTSAHDPINGYLPAGWDLARWESSRQSDPKAVEKAARASMAVHVQAMLDFCHMGIPTVDYGNNIRQVALDEGVKNAFDFPGFVPAYIRPLFCEGKGPFRWVALSGDPEDIYKTDAKLKALFPEHTNLHRWLDMAQERIAFQGLPARICWLGLGERHLAGLAFNEMVRNGELKAPVVIGRDHLDCGSVASPNRETEAMMDGSDAVSDWPLLNALLNTAGGATWVSLHHGGGVGMGFSQHAGVVIVADGTAEADARLSRVLWNDPATGVMRHADAGYEVARDCARRHELTLPMAKELP</sequence>